<reference key="1">
    <citation type="journal article" date="1990" name="Nucleic Acids Res.">
        <title>Molecular cloning, genetic characterization and DNA sequence analysis of the recM region of Bacillus subtilis.</title>
        <authorList>
            <person name="Alonso J.C."/>
            <person name="Shirahige K."/>
            <person name="Ogasawara N."/>
        </authorList>
    </citation>
    <scope>NUCLEOTIDE SEQUENCE [GENOMIC DNA]</scope>
    <source>
        <strain>168 / YB886 / BG214</strain>
    </source>
</reference>
<reference key="2">
    <citation type="journal article" date="1994" name="DNA Res.">
        <title>Systematic sequencing of the 180 kilobase region of the Bacillus subtilis chromosome containing the replication origin.</title>
        <authorList>
            <person name="Ogasawara N."/>
            <person name="Nakai S."/>
            <person name="Yoshikawa H."/>
        </authorList>
    </citation>
    <scope>NUCLEOTIDE SEQUENCE [GENOMIC DNA]</scope>
    <source>
        <strain>168</strain>
    </source>
</reference>
<reference key="3">
    <citation type="journal article" date="1997" name="Nature">
        <title>The complete genome sequence of the Gram-positive bacterium Bacillus subtilis.</title>
        <authorList>
            <person name="Kunst F."/>
            <person name="Ogasawara N."/>
            <person name="Moszer I."/>
            <person name="Albertini A.M."/>
            <person name="Alloni G."/>
            <person name="Azevedo V."/>
            <person name="Bertero M.G."/>
            <person name="Bessieres P."/>
            <person name="Bolotin A."/>
            <person name="Borchert S."/>
            <person name="Borriss R."/>
            <person name="Boursier L."/>
            <person name="Brans A."/>
            <person name="Braun M."/>
            <person name="Brignell S.C."/>
            <person name="Bron S."/>
            <person name="Brouillet S."/>
            <person name="Bruschi C.V."/>
            <person name="Caldwell B."/>
            <person name="Capuano V."/>
            <person name="Carter N.M."/>
            <person name="Choi S.-K."/>
            <person name="Codani J.-J."/>
            <person name="Connerton I.F."/>
            <person name="Cummings N.J."/>
            <person name="Daniel R.A."/>
            <person name="Denizot F."/>
            <person name="Devine K.M."/>
            <person name="Duesterhoeft A."/>
            <person name="Ehrlich S.D."/>
            <person name="Emmerson P.T."/>
            <person name="Entian K.-D."/>
            <person name="Errington J."/>
            <person name="Fabret C."/>
            <person name="Ferrari E."/>
            <person name="Foulger D."/>
            <person name="Fritz C."/>
            <person name="Fujita M."/>
            <person name="Fujita Y."/>
            <person name="Fuma S."/>
            <person name="Galizzi A."/>
            <person name="Galleron N."/>
            <person name="Ghim S.-Y."/>
            <person name="Glaser P."/>
            <person name="Goffeau A."/>
            <person name="Golightly E.J."/>
            <person name="Grandi G."/>
            <person name="Guiseppi G."/>
            <person name="Guy B.J."/>
            <person name="Haga K."/>
            <person name="Haiech J."/>
            <person name="Harwood C.R."/>
            <person name="Henaut A."/>
            <person name="Hilbert H."/>
            <person name="Holsappel S."/>
            <person name="Hosono S."/>
            <person name="Hullo M.-F."/>
            <person name="Itaya M."/>
            <person name="Jones L.-M."/>
            <person name="Joris B."/>
            <person name="Karamata D."/>
            <person name="Kasahara Y."/>
            <person name="Klaerr-Blanchard M."/>
            <person name="Klein C."/>
            <person name="Kobayashi Y."/>
            <person name="Koetter P."/>
            <person name="Koningstein G."/>
            <person name="Krogh S."/>
            <person name="Kumano M."/>
            <person name="Kurita K."/>
            <person name="Lapidus A."/>
            <person name="Lardinois S."/>
            <person name="Lauber J."/>
            <person name="Lazarevic V."/>
            <person name="Lee S.-M."/>
            <person name="Levine A."/>
            <person name="Liu H."/>
            <person name="Masuda S."/>
            <person name="Mauel C."/>
            <person name="Medigue C."/>
            <person name="Medina N."/>
            <person name="Mellado R.P."/>
            <person name="Mizuno M."/>
            <person name="Moestl D."/>
            <person name="Nakai S."/>
            <person name="Noback M."/>
            <person name="Noone D."/>
            <person name="O'Reilly M."/>
            <person name="Ogawa K."/>
            <person name="Ogiwara A."/>
            <person name="Oudega B."/>
            <person name="Park S.-H."/>
            <person name="Parro V."/>
            <person name="Pohl T.M."/>
            <person name="Portetelle D."/>
            <person name="Porwollik S."/>
            <person name="Prescott A.M."/>
            <person name="Presecan E."/>
            <person name="Pujic P."/>
            <person name="Purnelle B."/>
            <person name="Rapoport G."/>
            <person name="Rey M."/>
            <person name="Reynolds S."/>
            <person name="Rieger M."/>
            <person name="Rivolta C."/>
            <person name="Rocha E."/>
            <person name="Roche B."/>
            <person name="Rose M."/>
            <person name="Sadaie Y."/>
            <person name="Sato T."/>
            <person name="Scanlan E."/>
            <person name="Schleich S."/>
            <person name="Schroeter R."/>
            <person name="Scoffone F."/>
            <person name="Sekiguchi J."/>
            <person name="Sekowska A."/>
            <person name="Seror S.J."/>
            <person name="Serror P."/>
            <person name="Shin B.-S."/>
            <person name="Soldo B."/>
            <person name="Sorokin A."/>
            <person name="Tacconi E."/>
            <person name="Takagi T."/>
            <person name="Takahashi H."/>
            <person name="Takemaru K."/>
            <person name="Takeuchi M."/>
            <person name="Tamakoshi A."/>
            <person name="Tanaka T."/>
            <person name="Terpstra P."/>
            <person name="Tognoni A."/>
            <person name="Tosato V."/>
            <person name="Uchiyama S."/>
            <person name="Vandenbol M."/>
            <person name="Vannier F."/>
            <person name="Vassarotti A."/>
            <person name="Viari A."/>
            <person name="Wambutt R."/>
            <person name="Wedler E."/>
            <person name="Wedler H."/>
            <person name="Weitzenegger T."/>
            <person name="Winters P."/>
            <person name="Wipat A."/>
            <person name="Yamamoto H."/>
            <person name="Yamane K."/>
            <person name="Yasumoto K."/>
            <person name="Yata K."/>
            <person name="Yoshida K."/>
            <person name="Yoshikawa H.-F."/>
            <person name="Zumstein E."/>
            <person name="Yoshikawa H."/>
            <person name="Danchin A."/>
        </authorList>
    </citation>
    <scope>NUCLEOTIDE SEQUENCE [LARGE SCALE GENOMIC DNA]</scope>
    <source>
        <strain>168</strain>
    </source>
</reference>
<name>RECR_BACSU</name>
<accession>P24277</accession>
<feature type="chain" id="PRO_0000190283" description="Recombination protein RecR">
    <location>
        <begin position="1"/>
        <end position="198"/>
    </location>
</feature>
<feature type="domain" description="Toprim" evidence="1">
    <location>
        <begin position="80"/>
        <end position="175"/>
    </location>
</feature>
<feature type="zinc finger region" description="C4-type" evidence="1">
    <location>
        <begin position="57"/>
        <end position="72"/>
    </location>
</feature>
<feature type="sequence conflict" description="In Ref. 1." evidence="2" ref="1">
    <original>EYADEVTLSKALEGRREL</original>
    <variation>DMLMRSLFLKHLKEDVNCKEEKAIHGFSSQENIKKRV</variation>
    <location>
        <begin position="181"/>
        <end position="198"/>
    </location>
</feature>
<evidence type="ECO:0000255" key="1">
    <source>
        <dbReference type="HAMAP-Rule" id="MF_00017"/>
    </source>
</evidence>
<evidence type="ECO:0000305" key="2"/>
<comment type="function">
    <text evidence="1">May play a role in DNA repair. It seems to be involved in an RecBC-independent recombinational process of DNA repair. It may act with RecF and RecO.</text>
</comment>
<comment type="similarity">
    <text evidence="1">Belongs to the RecR family.</text>
</comment>
<organism>
    <name type="scientific">Bacillus subtilis (strain 168)</name>
    <dbReference type="NCBI Taxonomy" id="224308"/>
    <lineage>
        <taxon>Bacteria</taxon>
        <taxon>Bacillati</taxon>
        <taxon>Bacillota</taxon>
        <taxon>Bacilli</taxon>
        <taxon>Bacillales</taxon>
        <taxon>Bacillaceae</taxon>
        <taxon>Bacillus</taxon>
    </lineage>
</organism>
<gene>
    <name evidence="1" type="primary">recR</name>
    <name type="synonym">recD</name>
    <name type="synonym">recM</name>
    <name type="ordered locus">BSU00210</name>
</gene>
<keyword id="KW-0227">DNA damage</keyword>
<keyword id="KW-0233">DNA recombination</keyword>
<keyword id="KW-0234">DNA repair</keyword>
<keyword id="KW-0479">Metal-binding</keyword>
<keyword id="KW-1185">Reference proteome</keyword>
<keyword id="KW-0862">Zinc</keyword>
<keyword id="KW-0863">Zinc-finger</keyword>
<protein>
    <recommendedName>
        <fullName evidence="1">Recombination protein RecR</fullName>
    </recommendedName>
</protein>
<dbReference type="EMBL" id="X17014">
    <property type="protein sequence ID" value="CAA34879.1"/>
    <property type="molecule type" value="Genomic_DNA"/>
</dbReference>
<dbReference type="EMBL" id="D26185">
    <property type="protein sequence ID" value="BAA05257.1"/>
    <property type="molecule type" value="Genomic_DNA"/>
</dbReference>
<dbReference type="EMBL" id="AL009126">
    <property type="protein sequence ID" value="CAB11797.1"/>
    <property type="molecule type" value="Genomic_DNA"/>
</dbReference>
<dbReference type="PIR" id="B69691">
    <property type="entry name" value="B69691"/>
</dbReference>
<dbReference type="RefSeq" id="NP_387902.1">
    <property type="nucleotide sequence ID" value="NC_000964.3"/>
</dbReference>
<dbReference type="RefSeq" id="WP_003225425.1">
    <property type="nucleotide sequence ID" value="NZ_OZ025638.1"/>
</dbReference>
<dbReference type="SMR" id="P24277"/>
<dbReference type="FunCoup" id="P24277">
    <property type="interactions" value="341"/>
</dbReference>
<dbReference type="STRING" id="224308.BSU00210"/>
<dbReference type="PaxDb" id="224308-BSU00210"/>
<dbReference type="EnsemblBacteria" id="CAB11797">
    <property type="protein sequence ID" value="CAB11797"/>
    <property type="gene ID" value="BSU_00210"/>
</dbReference>
<dbReference type="GeneID" id="86871223"/>
<dbReference type="GeneID" id="937197"/>
<dbReference type="KEGG" id="bsu:BSU00210"/>
<dbReference type="PATRIC" id="fig|224308.179.peg.21"/>
<dbReference type="eggNOG" id="COG0353">
    <property type="taxonomic scope" value="Bacteria"/>
</dbReference>
<dbReference type="InParanoid" id="P24277"/>
<dbReference type="OrthoDB" id="9802672at2"/>
<dbReference type="PhylomeDB" id="P24277"/>
<dbReference type="BioCyc" id="BSUB:BSU00210-MONOMER"/>
<dbReference type="PRO" id="PR:P24277"/>
<dbReference type="Proteomes" id="UP000001570">
    <property type="component" value="Chromosome"/>
</dbReference>
<dbReference type="GO" id="GO:0003677">
    <property type="term" value="F:DNA binding"/>
    <property type="evidence" value="ECO:0007669"/>
    <property type="project" value="UniProtKB-UniRule"/>
</dbReference>
<dbReference type="GO" id="GO:0008270">
    <property type="term" value="F:zinc ion binding"/>
    <property type="evidence" value="ECO:0007669"/>
    <property type="project" value="UniProtKB-KW"/>
</dbReference>
<dbReference type="GO" id="GO:0006302">
    <property type="term" value="P:double-strand break repair"/>
    <property type="evidence" value="ECO:0000318"/>
    <property type="project" value="GO_Central"/>
</dbReference>
<dbReference type="GO" id="GO:0000725">
    <property type="term" value="P:recombinational repair"/>
    <property type="evidence" value="ECO:0000318"/>
    <property type="project" value="GO_Central"/>
</dbReference>
<dbReference type="CDD" id="cd01025">
    <property type="entry name" value="TOPRIM_recR"/>
    <property type="match status" value="1"/>
</dbReference>
<dbReference type="Gene3D" id="3.30.60.80">
    <property type="match status" value="1"/>
</dbReference>
<dbReference type="Gene3D" id="3.40.1360.10">
    <property type="match status" value="1"/>
</dbReference>
<dbReference type="Gene3D" id="6.10.250.240">
    <property type="match status" value="1"/>
</dbReference>
<dbReference type="Gene3D" id="1.10.8.420">
    <property type="entry name" value="RecR Domain 1"/>
    <property type="match status" value="1"/>
</dbReference>
<dbReference type="HAMAP" id="MF_00017">
    <property type="entry name" value="RecR"/>
    <property type="match status" value="1"/>
</dbReference>
<dbReference type="InterPro" id="IPR000093">
    <property type="entry name" value="DNA_Rcmb_RecR"/>
</dbReference>
<dbReference type="InterPro" id="IPR023627">
    <property type="entry name" value="Rcmb_RecR"/>
</dbReference>
<dbReference type="InterPro" id="IPR015967">
    <property type="entry name" value="Rcmb_RecR_Znf"/>
</dbReference>
<dbReference type="InterPro" id="IPR006171">
    <property type="entry name" value="TOPRIM_dom"/>
</dbReference>
<dbReference type="InterPro" id="IPR034137">
    <property type="entry name" value="TOPRIM_RecR"/>
</dbReference>
<dbReference type="NCBIfam" id="TIGR00615">
    <property type="entry name" value="recR"/>
    <property type="match status" value="1"/>
</dbReference>
<dbReference type="PANTHER" id="PTHR30446">
    <property type="entry name" value="RECOMBINATION PROTEIN RECR"/>
    <property type="match status" value="1"/>
</dbReference>
<dbReference type="PANTHER" id="PTHR30446:SF0">
    <property type="entry name" value="RECOMBINATION PROTEIN RECR"/>
    <property type="match status" value="1"/>
</dbReference>
<dbReference type="Pfam" id="PF21175">
    <property type="entry name" value="RecR_C"/>
    <property type="match status" value="1"/>
</dbReference>
<dbReference type="Pfam" id="PF21176">
    <property type="entry name" value="RecR_HhH"/>
    <property type="match status" value="1"/>
</dbReference>
<dbReference type="Pfam" id="PF02132">
    <property type="entry name" value="RecR_ZnF"/>
    <property type="match status" value="1"/>
</dbReference>
<dbReference type="Pfam" id="PF13662">
    <property type="entry name" value="Toprim_4"/>
    <property type="match status" value="1"/>
</dbReference>
<dbReference type="SMART" id="SM00493">
    <property type="entry name" value="TOPRIM"/>
    <property type="match status" value="1"/>
</dbReference>
<dbReference type="SUPFAM" id="SSF111304">
    <property type="entry name" value="Recombination protein RecR"/>
    <property type="match status" value="1"/>
</dbReference>
<dbReference type="PROSITE" id="PS01300">
    <property type="entry name" value="RECR"/>
    <property type="match status" value="1"/>
</dbReference>
<dbReference type="PROSITE" id="PS50880">
    <property type="entry name" value="TOPRIM"/>
    <property type="match status" value="1"/>
</dbReference>
<proteinExistence type="inferred from homology"/>
<sequence>MQYPEPISKLIDSFMKLPGIGPKTAVRLAFFVLGMKEDVVLDFAKALVNAKRNLTYCSVCGHITDQDPCYICEDTRRDKSVICVVQDPKDVIAMEKMKEYNGQYHVLHGAISPMDGIGPEDIKIPELLKRLQDDQVTEVILATNPNIEGEATAMYISRLLKPSGIKLSRIAHGLPVGGDLEYADEVTLSKALEGRREL</sequence>